<proteinExistence type="inferred from homology"/>
<name>PHM2_PYRSX</name>
<accession>A0A2Z5XAS1</accession>
<sequence length="747" mass="83066">MSDTASTATGHRKRDKPQLSCNACRKRKRVRCDRLHPCSNCASRGLGSTCTFAAISSPTNMPPSHGHSIPVQHRVESARPGPTNSMQTRINQLENLVIELMNQNNTPGMRTGLQNQGSDARSDARCQPTPLSSETEFEYPVAPSPSDHGSINTRLARPTYVSSSHWAAIFDSITELRNHFVQEDIEHGASTVLPSSTVPKPQILYGAWTSETPHAIISSLPPRTTVDRLISRYFNVLDIAPGVVHSTQFLREYENFWMAPQDAPIMWVGLLFAMMCLSAQLQQASLPAHDSRPSSSRASQQDSIAIYREKTIQCLQLGHYTMGGTHALETLILYFLGECFNLKDMEIGIWILSGTILQIAIHMGYHRDAKNFPSITPFAGEMRRRVWAMIVQLDFSISAQLGLPTLIKASQTDTAEPRNLYDTDFDEDSSALPESRPETEVTPTLYVLAKLRLISIGLRVTNVASESRTRSYSDVLELDRQLREARDALPSSLKWIDLGTSLNVSSQTILQRIWLEVTIQQLTIVLHKKFLGVSGLQKDFKTSRAACLNAAVKILELQRLVDDETQPDGLLYQSRWRVSSAFSNDFLLATSILCYCLQNRPEGTISNFDESVSVGLDQIRALLETSKSIWSRQCAESKEAHKAVAALRYVLGHSGADVDSGYTVAERQPLPMPTAALSYFPDLTSDYNFAGFDFGSSDTTRWTAFASDELGEENWSRGAGFQQMDMSLKLEAFDRVVPNSIPSRCLS</sequence>
<reference key="1">
    <citation type="journal article" date="2018" name="Angew. Chem. Int. Ed.">
        <title>Control of the stereochemical course of [4+2] cycloaddition during trans-decalin formation by Fsa2-family enzymes.</title>
        <authorList>
            <person name="Kato N."/>
            <person name="Nogawa T."/>
            <person name="Takita R."/>
            <person name="Kinugasa K."/>
            <person name="Kanai M."/>
            <person name="Uchiyama M."/>
            <person name="Osada H."/>
            <person name="Takahashi S."/>
        </authorList>
    </citation>
    <scope>NUCLEOTIDE SEQUENCE [GENOMIC DNA]</scope>
    <scope>FUNCTION</scope>
    <source>
        <strain>RK10-F058</strain>
    </source>
</reference>
<dbReference type="EMBL" id="LC361337">
    <property type="protein sequence ID" value="BBC43185.1"/>
    <property type="status" value="ALT_SEQ"/>
    <property type="molecule type" value="Genomic_DNA"/>
</dbReference>
<dbReference type="GO" id="GO:0005634">
    <property type="term" value="C:nucleus"/>
    <property type="evidence" value="ECO:0007669"/>
    <property type="project" value="UniProtKB-SubCell"/>
</dbReference>
<dbReference type="GO" id="GO:0003677">
    <property type="term" value="F:DNA binding"/>
    <property type="evidence" value="ECO:0007669"/>
    <property type="project" value="UniProtKB-KW"/>
</dbReference>
<dbReference type="GO" id="GO:0000981">
    <property type="term" value="F:DNA-binding transcription factor activity, RNA polymerase II-specific"/>
    <property type="evidence" value="ECO:0007669"/>
    <property type="project" value="InterPro"/>
</dbReference>
<dbReference type="GO" id="GO:0008270">
    <property type="term" value="F:zinc ion binding"/>
    <property type="evidence" value="ECO:0007669"/>
    <property type="project" value="InterPro"/>
</dbReference>
<dbReference type="GO" id="GO:0006351">
    <property type="term" value="P:DNA-templated transcription"/>
    <property type="evidence" value="ECO:0007669"/>
    <property type="project" value="InterPro"/>
</dbReference>
<dbReference type="CDD" id="cd12148">
    <property type="entry name" value="fungal_TF_MHR"/>
    <property type="match status" value="1"/>
</dbReference>
<dbReference type="CDD" id="cd00067">
    <property type="entry name" value="GAL4"/>
    <property type="match status" value="1"/>
</dbReference>
<dbReference type="Gene3D" id="4.10.240.10">
    <property type="entry name" value="Zn(2)-C6 fungal-type DNA-binding domain"/>
    <property type="match status" value="1"/>
</dbReference>
<dbReference type="InterPro" id="IPR050613">
    <property type="entry name" value="Sec_Metabolite_Reg"/>
</dbReference>
<dbReference type="InterPro" id="IPR007219">
    <property type="entry name" value="Transcription_factor_dom_fun"/>
</dbReference>
<dbReference type="InterPro" id="IPR036864">
    <property type="entry name" value="Zn2-C6_fun-type_DNA-bd_sf"/>
</dbReference>
<dbReference type="InterPro" id="IPR001138">
    <property type="entry name" value="Zn2Cys6_DnaBD"/>
</dbReference>
<dbReference type="PANTHER" id="PTHR31001">
    <property type="entry name" value="UNCHARACTERIZED TRANSCRIPTIONAL REGULATORY PROTEIN"/>
    <property type="match status" value="1"/>
</dbReference>
<dbReference type="PANTHER" id="PTHR31001:SF74">
    <property type="entry name" value="ZN(II)2CYS6 TRANSCRIPTION FACTOR (EUROFUNG)"/>
    <property type="match status" value="1"/>
</dbReference>
<dbReference type="Pfam" id="PF04082">
    <property type="entry name" value="Fungal_trans"/>
    <property type="match status" value="1"/>
</dbReference>
<dbReference type="Pfam" id="PF00172">
    <property type="entry name" value="Zn_clus"/>
    <property type="match status" value="1"/>
</dbReference>
<dbReference type="SMART" id="SM00906">
    <property type="entry name" value="Fungal_trans"/>
    <property type="match status" value="1"/>
</dbReference>
<dbReference type="SMART" id="SM00066">
    <property type="entry name" value="GAL4"/>
    <property type="match status" value="1"/>
</dbReference>
<dbReference type="SUPFAM" id="SSF57701">
    <property type="entry name" value="Zn2/Cys6 DNA-binding domain"/>
    <property type="match status" value="1"/>
</dbReference>
<dbReference type="PROSITE" id="PS50048">
    <property type="entry name" value="ZN2_CY6_FUNGAL_2"/>
    <property type="match status" value="1"/>
</dbReference>
<evidence type="ECO:0000255" key="1">
    <source>
        <dbReference type="PROSITE-ProRule" id="PRU00227"/>
    </source>
</evidence>
<evidence type="ECO:0000256" key="2">
    <source>
        <dbReference type="SAM" id="MobiDB-lite"/>
    </source>
</evidence>
<evidence type="ECO:0000269" key="3">
    <source>
    </source>
</evidence>
<evidence type="ECO:0000303" key="4">
    <source>
    </source>
</evidence>
<evidence type="ECO:0000305" key="5"/>
<organism>
    <name type="scientific">Pyrenochaetopsis sp</name>
    <dbReference type="NCBI Taxonomy" id="1756125"/>
    <lineage>
        <taxon>Eukaryota</taxon>
        <taxon>Fungi</taxon>
        <taxon>Dikarya</taxon>
        <taxon>Ascomycota</taxon>
        <taxon>Pezizomycotina</taxon>
        <taxon>Dothideomycetes</taxon>
        <taxon>Pleosporomycetidae</taxon>
        <taxon>Pleosporales</taxon>
        <taxon>Pleosporineae</taxon>
        <taxon>Pyrenochaetopsidaceae</taxon>
        <taxon>Pyrenochaetopsis</taxon>
    </lineage>
</organism>
<protein>
    <recommendedName>
        <fullName evidence="4">Transcription factor phm2</fullName>
    </recommendedName>
    <alternativeName>
        <fullName evidence="4">Phomasetin biosynthesis cluster protein 2</fullName>
    </alternativeName>
</protein>
<gene>
    <name evidence="4" type="primary">phm2</name>
</gene>
<comment type="function">
    <text evidence="3">Transcription factor that regulates the expression of the gene cluster that mediates the biosynthesis of the trans-fused decalin-containing tetramic acid phomasetin.</text>
</comment>
<comment type="subcellular location">
    <subcellularLocation>
        <location evidence="1">Nucleus</location>
    </subcellularLocation>
</comment>
<comment type="sequence caution" evidence="5">
    <conflict type="erroneous gene model prediction">
        <sequence resource="EMBL-CDS" id="BBC43185"/>
    </conflict>
</comment>
<feature type="chain" id="PRO_0000453353" description="Transcription factor phm2">
    <location>
        <begin position="1"/>
        <end position="747"/>
    </location>
</feature>
<feature type="DNA-binding region" description="Zn(2)-C6 fungal-type" evidence="1">
    <location>
        <begin position="21"/>
        <end position="50"/>
    </location>
</feature>
<feature type="region of interest" description="Disordered" evidence="2">
    <location>
        <begin position="112"/>
        <end position="150"/>
    </location>
</feature>
<feature type="region of interest" description="Disordered" evidence="2">
    <location>
        <begin position="414"/>
        <end position="436"/>
    </location>
</feature>
<keyword id="KW-0238">DNA-binding</keyword>
<keyword id="KW-0479">Metal-binding</keyword>
<keyword id="KW-0539">Nucleus</keyword>
<keyword id="KW-0804">Transcription</keyword>
<keyword id="KW-0805">Transcription regulation</keyword>
<keyword id="KW-0862">Zinc</keyword>